<gene>
    <name type="primary">gadX</name>
    <name type="ordered locus">E2348C_3758</name>
</gene>
<proteinExistence type="inferred from homology"/>
<reference key="1">
    <citation type="journal article" date="2001" name="Mol. Microbiol.">
        <title>An activator of glutamate decarboxylase genes regulates the expression of enteropathogenic Escherichia coli virulence genes through control of the plasmid-encoded regulator, Per.</title>
        <authorList>
            <person name="Shin S."/>
            <person name="Castanie-Cornet M.-P."/>
            <person name="Foster J.W."/>
            <person name="Crawford J.A."/>
            <person name="Brinkley C."/>
            <person name="Kaper J.B."/>
        </authorList>
    </citation>
    <scope>NUCLEOTIDE SEQUENCE [GENOMIC DNA]</scope>
    <scope>FUNCTION</scope>
</reference>
<reference key="2">
    <citation type="journal article" date="2009" name="J. Bacteriol.">
        <title>Complete genome sequence and comparative genome analysis of enteropathogenic Escherichia coli O127:H6 strain E2348/69.</title>
        <authorList>
            <person name="Iguchi A."/>
            <person name="Thomson N.R."/>
            <person name="Ogura Y."/>
            <person name="Saunders D."/>
            <person name="Ooka T."/>
            <person name="Henderson I.R."/>
            <person name="Harris D."/>
            <person name="Asadulghani M."/>
            <person name="Kurokawa K."/>
            <person name="Dean P."/>
            <person name="Kenny B."/>
            <person name="Quail M.A."/>
            <person name="Thurston S."/>
            <person name="Dougan G."/>
            <person name="Hayashi T."/>
            <person name="Parkhill J."/>
            <person name="Frankel G."/>
        </authorList>
    </citation>
    <scope>NUCLEOTIDE SEQUENCE [LARGE SCALE GENOMIC DNA]</scope>
    <source>
        <strain>E2348/69 / EPEC</strain>
    </source>
</reference>
<accession>Q9EYV5</accession>
<accession>B7UL69</accession>
<organism>
    <name type="scientific">Escherichia coli O127:H6 (strain E2348/69 / EPEC)</name>
    <dbReference type="NCBI Taxonomy" id="574521"/>
    <lineage>
        <taxon>Bacteria</taxon>
        <taxon>Pseudomonadati</taxon>
        <taxon>Pseudomonadota</taxon>
        <taxon>Gammaproteobacteria</taxon>
        <taxon>Enterobacterales</taxon>
        <taxon>Enterobacteriaceae</taxon>
        <taxon>Escherichia</taxon>
    </lineage>
</organism>
<feature type="chain" id="PRO_0000194519" description="HTH-type transcriptional regulator GadX">
    <location>
        <begin position="1"/>
        <end position="274"/>
    </location>
</feature>
<feature type="domain" description="HTH araC/xylS-type" evidence="2">
    <location>
        <begin position="145"/>
        <end position="242"/>
    </location>
</feature>
<feature type="DNA-binding region" description="H-T-H motif" evidence="2">
    <location>
        <begin position="162"/>
        <end position="183"/>
    </location>
</feature>
<feature type="DNA-binding region" description="H-T-H motif" evidence="2">
    <location>
        <begin position="209"/>
        <end position="232"/>
    </location>
</feature>
<evidence type="ECO:0000250" key="1"/>
<evidence type="ECO:0000255" key="2">
    <source>
        <dbReference type="PROSITE-ProRule" id="PRU00593"/>
    </source>
</evidence>
<evidence type="ECO:0000269" key="3">
    <source>
    </source>
</evidence>
<name>GADX_ECO27</name>
<keyword id="KW-0010">Activator</keyword>
<keyword id="KW-0238">DNA-binding</keyword>
<keyword id="KW-1185">Reference proteome</keyword>
<keyword id="KW-0678">Repressor</keyword>
<keyword id="KW-0804">Transcription</keyword>
<keyword id="KW-0805">Transcription regulation</keyword>
<keyword id="KW-0843">Virulence</keyword>
<comment type="function">
    <text evidence="1 3">Positively regulates the expression of about fifteen genes involved in acid resistance such as gadA, gadB and gadC. Depending on the conditions (growth phase and medium), can repress gadW (By similarity). Negatively regulates perA expression in acidic conditions and positively regulates it in alkaline conditions.</text>
</comment>
<comment type="subunit">
    <text evidence="1">Homodimer.</text>
</comment>
<comment type="induction">
    <text evidence="1">Expression can be activated by RpoS and repressed by CRP, H-NS and GadW, depending on the conditions.</text>
</comment>
<dbReference type="EMBL" id="AF311305">
    <property type="protein sequence ID" value="AAG42472.1"/>
    <property type="molecule type" value="Genomic_DNA"/>
</dbReference>
<dbReference type="EMBL" id="FM180568">
    <property type="protein sequence ID" value="CAS11306.1"/>
    <property type="molecule type" value="Genomic_DNA"/>
</dbReference>
<dbReference type="RefSeq" id="WP_001182739.1">
    <property type="nucleotide sequence ID" value="NC_011601.1"/>
</dbReference>
<dbReference type="SMR" id="Q9EYV5"/>
<dbReference type="KEGG" id="ecg:E2348C_3758"/>
<dbReference type="HOGENOM" id="CLU_091292_0_0_6"/>
<dbReference type="Proteomes" id="UP000008205">
    <property type="component" value="Chromosome"/>
</dbReference>
<dbReference type="GO" id="GO:0005829">
    <property type="term" value="C:cytosol"/>
    <property type="evidence" value="ECO:0007669"/>
    <property type="project" value="TreeGrafter"/>
</dbReference>
<dbReference type="GO" id="GO:0003700">
    <property type="term" value="F:DNA-binding transcription factor activity"/>
    <property type="evidence" value="ECO:0007669"/>
    <property type="project" value="InterPro"/>
</dbReference>
<dbReference type="GO" id="GO:0000976">
    <property type="term" value="F:transcription cis-regulatory region binding"/>
    <property type="evidence" value="ECO:0007669"/>
    <property type="project" value="TreeGrafter"/>
</dbReference>
<dbReference type="Gene3D" id="1.10.10.60">
    <property type="entry name" value="Homeodomain-like"/>
    <property type="match status" value="1"/>
</dbReference>
<dbReference type="InterPro" id="IPR009057">
    <property type="entry name" value="Homeodomain-like_sf"/>
</dbReference>
<dbReference type="InterPro" id="IPR018060">
    <property type="entry name" value="HTH_AraC"/>
</dbReference>
<dbReference type="InterPro" id="IPR018062">
    <property type="entry name" value="HTH_AraC-typ_CS"/>
</dbReference>
<dbReference type="InterPro" id="IPR020449">
    <property type="entry name" value="Tscrpt_reg_AraC-type_HTH"/>
</dbReference>
<dbReference type="NCBIfam" id="NF007432">
    <property type="entry name" value="PRK09978.1"/>
    <property type="match status" value="1"/>
</dbReference>
<dbReference type="PANTHER" id="PTHR47894">
    <property type="entry name" value="HTH-TYPE TRANSCRIPTIONAL REGULATOR GADX"/>
    <property type="match status" value="1"/>
</dbReference>
<dbReference type="PANTHER" id="PTHR47894:SF4">
    <property type="entry name" value="HTH-TYPE TRANSCRIPTIONAL REGULATOR GADX"/>
    <property type="match status" value="1"/>
</dbReference>
<dbReference type="Pfam" id="PF12833">
    <property type="entry name" value="HTH_18"/>
    <property type="match status" value="1"/>
</dbReference>
<dbReference type="PRINTS" id="PR00032">
    <property type="entry name" value="HTHARAC"/>
</dbReference>
<dbReference type="SMART" id="SM00342">
    <property type="entry name" value="HTH_ARAC"/>
    <property type="match status" value="1"/>
</dbReference>
<dbReference type="SUPFAM" id="SSF46689">
    <property type="entry name" value="Homeodomain-like"/>
    <property type="match status" value="1"/>
</dbReference>
<dbReference type="PROSITE" id="PS00041">
    <property type="entry name" value="HTH_ARAC_FAMILY_1"/>
    <property type="match status" value="1"/>
</dbReference>
<dbReference type="PROSITE" id="PS01124">
    <property type="entry name" value="HTH_ARAC_FAMILY_2"/>
    <property type="match status" value="1"/>
</dbReference>
<sequence length="274" mass="31289">MQPLHGNCLIAYARHKYILTMVNGEYRYFNGGDLVFADASQIQVDKCVENFVLVSRDTLSLFLPMLKEEALKLHAHKKVPSLLVHHCTRDIPVFQEVAQLSQNKNLRYAEMLRKRALIFALLSVFLEDTQFIPLLLNVLQPNMRTRVCTVINNNIAHEWTLARIASELLMSPSLLKKKLREEGTSYSQLLTECRMQRALQLIVIYGVSIKRVAVSCGYHSVSYFIYVFRNYYGMTPTEYQERSAQELPNCGPAASMAAQGNFYGTDRSAEGIRL</sequence>
<protein>
    <recommendedName>
        <fullName>HTH-type transcriptional regulator GadX</fullName>
    </recommendedName>
</protein>